<reference key="1">
    <citation type="journal article" date="2001" name="J. Bacteriol.">
        <title>Genetic organization of the region encoding regulation, biosynthesis, and transport of rhizobactin 1021, a siderophore produced by Sinorhizobium meliloti.</title>
        <authorList>
            <person name="Lynch D."/>
            <person name="O'Brien J."/>
            <person name="Welch T."/>
            <person name="Clarke P."/>
            <person name="Cuiv P.O."/>
            <person name="Crosa J.H."/>
            <person name="O'Connell M."/>
        </authorList>
    </citation>
    <scope>NUCLEOTIDE SEQUENCE [GENOMIC DNA]</scope>
    <source>
        <strain>RCR2011 / SU47</strain>
    </source>
</reference>
<reference key="2">
    <citation type="journal article" date="2001" name="Proc. Natl. Acad. Sci. U.S.A.">
        <title>Nucleotide sequence and predicted functions of the entire Sinorhizobium meliloti pSymA megaplasmid.</title>
        <authorList>
            <person name="Barnett M.J."/>
            <person name="Fisher R.F."/>
            <person name="Jones T."/>
            <person name="Komp C."/>
            <person name="Abola A.P."/>
            <person name="Barloy-Hubler F."/>
            <person name="Bowser L."/>
            <person name="Capela D."/>
            <person name="Galibert F."/>
            <person name="Gouzy J."/>
            <person name="Gurjal M."/>
            <person name="Hong A."/>
            <person name="Huizar L."/>
            <person name="Hyman R.W."/>
            <person name="Kahn D."/>
            <person name="Kahn M.L."/>
            <person name="Kalman S."/>
            <person name="Keating D.H."/>
            <person name="Palm C."/>
            <person name="Peck M.C."/>
            <person name="Surzycki R."/>
            <person name="Wells D.H."/>
            <person name="Yeh K.-C."/>
            <person name="Davis R.W."/>
            <person name="Federspiel N.A."/>
            <person name="Long S.R."/>
        </authorList>
    </citation>
    <scope>NUCLEOTIDE SEQUENCE [LARGE SCALE GENOMIC DNA]</scope>
    <source>
        <strain>1021</strain>
    </source>
</reference>
<reference key="3">
    <citation type="journal article" date="2001" name="Science">
        <title>The composite genome of the legume symbiont Sinorhizobium meliloti.</title>
        <authorList>
            <person name="Galibert F."/>
            <person name="Finan T.M."/>
            <person name="Long S.R."/>
            <person name="Puehler A."/>
            <person name="Abola P."/>
            <person name="Ampe F."/>
            <person name="Barloy-Hubler F."/>
            <person name="Barnett M.J."/>
            <person name="Becker A."/>
            <person name="Boistard P."/>
            <person name="Bothe G."/>
            <person name="Boutry M."/>
            <person name="Bowser L."/>
            <person name="Buhrmester J."/>
            <person name="Cadieu E."/>
            <person name="Capela D."/>
            <person name="Chain P."/>
            <person name="Cowie A."/>
            <person name="Davis R.W."/>
            <person name="Dreano S."/>
            <person name="Federspiel N.A."/>
            <person name="Fisher R.F."/>
            <person name="Gloux S."/>
            <person name="Godrie T."/>
            <person name="Goffeau A."/>
            <person name="Golding B."/>
            <person name="Gouzy J."/>
            <person name="Gurjal M."/>
            <person name="Hernandez-Lucas I."/>
            <person name="Hong A."/>
            <person name="Huizar L."/>
            <person name="Hyman R.W."/>
            <person name="Jones T."/>
            <person name="Kahn D."/>
            <person name="Kahn M.L."/>
            <person name="Kalman S."/>
            <person name="Keating D.H."/>
            <person name="Kiss E."/>
            <person name="Komp C."/>
            <person name="Lelaure V."/>
            <person name="Masuy D."/>
            <person name="Palm C."/>
            <person name="Peck M.C."/>
            <person name="Pohl T.M."/>
            <person name="Portetelle D."/>
            <person name="Purnelle B."/>
            <person name="Ramsperger U."/>
            <person name="Surzycki R."/>
            <person name="Thebault P."/>
            <person name="Vandenbol M."/>
            <person name="Vorhoelter F.J."/>
            <person name="Weidner S."/>
            <person name="Wells D.H."/>
            <person name="Wong K."/>
            <person name="Yeh K.-C."/>
            <person name="Batut J."/>
        </authorList>
    </citation>
    <scope>NUCLEOTIDE SEQUENCE [LARGE SCALE GENOMIC DNA]</scope>
    <source>
        <strain>1021</strain>
    </source>
</reference>
<feature type="signal peptide" evidence="1">
    <location>
        <begin position="1"/>
        <end position="26"/>
    </location>
</feature>
<feature type="chain" id="PRO_0000034772" description="Rhizobactin receptor">
    <location>
        <begin position="27"/>
        <end position="746"/>
    </location>
</feature>
<feature type="domain" description="TBDR plug" evidence="2">
    <location>
        <begin position="52"/>
        <end position="163"/>
    </location>
</feature>
<feature type="domain" description="TBDR beta-barrel" evidence="2">
    <location>
        <begin position="169"/>
        <end position="746"/>
    </location>
</feature>
<feature type="short sequence motif" description="TonB box">
    <location>
        <begin position="40"/>
        <end position="47"/>
    </location>
</feature>
<feature type="short sequence motif" description="TonB C-terminal box">
    <location>
        <begin position="729"/>
        <end position="746"/>
    </location>
</feature>
<name>RHTA_RHIME</name>
<geneLocation type="plasmid">
    <name>pSymA</name>
    <name>megaplasmid 1</name>
</geneLocation>
<protein>
    <recommendedName>
        <fullName>Rhizobactin receptor</fullName>
    </recommendedName>
    <alternativeName>
        <fullName>TonB-dependent siderophore receptor RhtA</fullName>
    </alternativeName>
</protein>
<proteinExistence type="inferred from homology"/>
<keyword id="KW-0998">Cell outer membrane</keyword>
<keyword id="KW-0406">Ion transport</keyword>
<keyword id="KW-0408">Iron</keyword>
<keyword id="KW-0410">Iron transport</keyword>
<keyword id="KW-0472">Membrane</keyword>
<keyword id="KW-0614">Plasmid</keyword>
<keyword id="KW-0675">Receptor</keyword>
<keyword id="KW-1185">Reference proteome</keyword>
<keyword id="KW-0732">Signal</keyword>
<keyword id="KW-0798">TonB box</keyword>
<keyword id="KW-0812">Transmembrane</keyword>
<keyword id="KW-1134">Transmembrane beta strand</keyword>
<keyword id="KW-0813">Transport</keyword>
<gene>
    <name type="primary">rhtA</name>
    <name type="ordered locus">RA1265</name>
    <name type="ORF">SMa2414</name>
</gene>
<dbReference type="EMBL" id="AF110737">
    <property type="protein sequence ID" value="AAD09419.1"/>
    <property type="molecule type" value="Genomic_DNA"/>
</dbReference>
<dbReference type="EMBL" id="AE006469">
    <property type="protein sequence ID" value="AAK65923.1"/>
    <property type="molecule type" value="Genomic_DNA"/>
</dbReference>
<dbReference type="PIR" id="A95420">
    <property type="entry name" value="A95420"/>
</dbReference>
<dbReference type="PIR" id="T46821">
    <property type="entry name" value="T46821"/>
</dbReference>
<dbReference type="RefSeq" id="NP_436511.1">
    <property type="nucleotide sequence ID" value="NC_003037.1"/>
</dbReference>
<dbReference type="RefSeq" id="WP_010968208.1">
    <property type="nucleotide sequence ID" value="NC_003037.1"/>
</dbReference>
<dbReference type="SMR" id="Q9Z3Q5"/>
<dbReference type="TCDB" id="1.B.14.9.1">
    <property type="family name" value="the outer membrane receptor (omr) family"/>
</dbReference>
<dbReference type="EnsemblBacteria" id="AAK65923">
    <property type="protein sequence ID" value="AAK65923"/>
    <property type="gene ID" value="SMa2414"/>
</dbReference>
<dbReference type="KEGG" id="sme:SMa2414"/>
<dbReference type="PATRIC" id="fig|266834.11.peg.1318"/>
<dbReference type="HOGENOM" id="CLU_015930_1_0_5"/>
<dbReference type="OrthoDB" id="9760333at2"/>
<dbReference type="Proteomes" id="UP000001976">
    <property type="component" value="Plasmid pSymA"/>
</dbReference>
<dbReference type="GO" id="GO:0009279">
    <property type="term" value="C:cell outer membrane"/>
    <property type="evidence" value="ECO:0007669"/>
    <property type="project" value="UniProtKB-SubCell"/>
</dbReference>
<dbReference type="GO" id="GO:0015344">
    <property type="term" value="F:siderophore uptake transmembrane transporter activity"/>
    <property type="evidence" value="ECO:0007669"/>
    <property type="project" value="TreeGrafter"/>
</dbReference>
<dbReference type="GO" id="GO:0038023">
    <property type="term" value="F:signaling receptor activity"/>
    <property type="evidence" value="ECO:0007669"/>
    <property type="project" value="InterPro"/>
</dbReference>
<dbReference type="CDD" id="cd01347">
    <property type="entry name" value="ligand_gated_channel"/>
    <property type="match status" value="1"/>
</dbReference>
<dbReference type="FunFam" id="2.40.170.20:FF:000007">
    <property type="entry name" value="Ferric aerobactin receptor"/>
    <property type="match status" value="1"/>
</dbReference>
<dbReference type="Gene3D" id="2.40.170.20">
    <property type="entry name" value="TonB-dependent receptor, beta-barrel domain"/>
    <property type="match status" value="1"/>
</dbReference>
<dbReference type="Gene3D" id="2.170.130.10">
    <property type="entry name" value="TonB-dependent receptor, plug domain"/>
    <property type="match status" value="1"/>
</dbReference>
<dbReference type="InterPro" id="IPR012910">
    <property type="entry name" value="Plug_dom"/>
</dbReference>
<dbReference type="InterPro" id="IPR037066">
    <property type="entry name" value="Plug_dom_sf"/>
</dbReference>
<dbReference type="InterPro" id="IPR039426">
    <property type="entry name" value="TonB-dep_rcpt-like"/>
</dbReference>
<dbReference type="InterPro" id="IPR000531">
    <property type="entry name" value="TonB-dep_rcpt_b-brl"/>
</dbReference>
<dbReference type="InterPro" id="IPR036942">
    <property type="entry name" value="TonB_rcpt_b-brl_sf"/>
</dbReference>
<dbReference type="InterPro" id="IPR010105">
    <property type="entry name" value="TonB_sidphr_rcpt"/>
</dbReference>
<dbReference type="NCBIfam" id="TIGR01783">
    <property type="entry name" value="TonB-siderophor"/>
    <property type="match status" value="1"/>
</dbReference>
<dbReference type="PANTHER" id="PTHR30069:SF42">
    <property type="entry name" value="FERRIC AEROBACTIN RECEPTOR"/>
    <property type="match status" value="1"/>
</dbReference>
<dbReference type="PANTHER" id="PTHR30069">
    <property type="entry name" value="TONB-DEPENDENT OUTER MEMBRANE RECEPTOR"/>
    <property type="match status" value="1"/>
</dbReference>
<dbReference type="Pfam" id="PF07715">
    <property type="entry name" value="Plug"/>
    <property type="match status" value="1"/>
</dbReference>
<dbReference type="Pfam" id="PF00593">
    <property type="entry name" value="TonB_dep_Rec_b-barrel"/>
    <property type="match status" value="1"/>
</dbReference>
<dbReference type="SUPFAM" id="SSF56935">
    <property type="entry name" value="Porins"/>
    <property type="match status" value="1"/>
</dbReference>
<dbReference type="PROSITE" id="PS52016">
    <property type="entry name" value="TONB_DEPENDENT_REC_3"/>
    <property type="match status" value="1"/>
</dbReference>
<evidence type="ECO:0000255" key="1"/>
<evidence type="ECO:0000255" key="2">
    <source>
        <dbReference type="PROSITE-ProRule" id="PRU01360"/>
    </source>
</evidence>
<evidence type="ECO:0000305" key="3"/>
<sequence>MGNNENGGISFCVFVVVIGFGTGAVAQEPANQSEAVTSLEEIVVTGGRSAQQISEIARTIYVVDSDQIQAEARSGKTLQQILGETIPSFDPASDGARTSFGQNLRGRPPLILVDGVSMNSARSLSRQFDAIDPFNIERVEVLSGATAIYGGNATGGIINIITKKGKDAEPGLHAEVTGGMGSGFAGSQDFDRNAAGAVTYNSENWDARLSIAGNRTGAFYDGSGTLLIPDITQTSTAFNERIDLMGSIGYQIDDDRRVEFSGQYFDSKQDSDYGLYYGPFFAALADPSLFETRSGYESDFNPQTRRSMLNVTYTDNDVFGQQLLLQGSYRTERIKFHPFPASGNSETGPYFYGSSQDTDYYGIRAALVAEPTDALKITYGIDADMDSFTARQNIFDMVAAGQSGGLDFNTIGKTGLYPSIDVSTVAGFAEASYEATDRLTLNGGVRYQFVNTEVSDFIGAAQQVAILQGRATSADTIPGGEVNYDAALFSAGATYQLTNTQQVYANFSQGFELPDPAKYYGIGNYSFSGGHYTLVNSVNVGDSALEAIKTNSFEIGYRLDDGTFNLETAAYYSLSDRSINLNRSSLAVEIIDRERRVYGIEGKAGVKLDHGFDVGVLGHWVRTEVKGADGWEKDSVGSASVSKLGGYVGWTNDALSLRFSGQHIFELTDAQNFTIDDYTLFDLTGGYRFENTDTTLNFGIHNVFDTDYTTVWGSRAKALYGGLADESVFDYKGRGRTFAVSLTKVF</sequence>
<comment type="function">
    <text>Receptor for the siderophore rhizobactin.</text>
</comment>
<comment type="subcellular location">
    <subcellularLocation>
        <location evidence="2">Cell outer membrane</location>
        <topology evidence="2">Multi-pass membrane protein</topology>
    </subcellularLocation>
</comment>
<comment type="similarity">
    <text evidence="3">Belongs to the TonB-dependent receptor family.</text>
</comment>
<accession>Q9Z3Q5</accession>
<organism>
    <name type="scientific">Rhizobium meliloti (strain 1021)</name>
    <name type="common">Ensifer meliloti</name>
    <name type="synonym">Sinorhizobium meliloti</name>
    <dbReference type="NCBI Taxonomy" id="266834"/>
    <lineage>
        <taxon>Bacteria</taxon>
        <taxon>Pseudomonadati</taxon>
        <taxon>Pseudomonadota</taxon>
        <taxon>Alphaproteobacteria</taxon>
        <taxon>Hyphomicrobiales</taxon>
        <taxon>Rhizobiaceae</taxon>
        <taxon>Sinorhizobium/Ensifer group</taxon>
        <taxon>Sinorhizobium</taxon>
    </lineage>
</organism>